<name>GPGS_PETMO</name>
<reference key="1">
    <citation type="submission" date="2007-11" db="EMBL/GenBank/DDBJ databases">
        <title>Complete sequence of Petroga mobilis SJ95.</title>
        <authorList>
            <consortium name="US DOE Joint Genome Institute"/>
            <person name="Copeland A."/>
            <person name="Lucas S."/>
            <person name="Lapidus A."/>
            <person name="Barry K."/>
            <person name="Glavina del Rio T."/>
            <person name="Dalin E."/>
            <person name="Tice H."/>
            <person name="Pitluck S."/>
            <person name="Meincke L."/>
            <person name="Brettin T."/>
            <person name="Bruce D."/>
            <person name="Detter J.C."/>
            <person name="Han C."/>
            <person name="Kuske C.R."/>
            <person name="Schmutz J."/>
            <person name="Larimer F."/>
            <person name="Land M."/>
            <person name="Hauser L."/>
            <person name="Kyrpides N."/>
            <person name="Mikhailova N."/>
            <person name="Noll K."/>
            <person name="Richardson P."/>
        </authorList>
    </citation>
    <scope>NUCLEOTIDE SEQUENCE [LARGE SCALE GENOMIC DNA]</scope>
    <source>
        <strain>DSM 10674 / SJ95</strain>
    </source>
</reference>
<reference key="2">
    <citation type="journal article" date="2010" name="J. Bacteriol.">
        <title>Two alternative pathways for the synthesis of the rare compatible solute mannosylglucosylglycerate in Petrotoga mobilis.</title>
        <authorList>
            <person name="Fernandes C."/>
            <person name="Mendes V."/>
            <person name="Costa J."/>
            <person name="Empadinhas N."/>
            <person name="Jorge C."/>
            <person name="Lamosa P."/>
            <person name="Santos H."/>
            <person name="da Costa M.S."/>
        </authorList>
    </citation>
    <scope>FUNCTION</scope>
    <scope>CATALYTIC ACTIVITY</scope>
    <scope>COFACTOR</scope>
    <scope>ACTIVITY REGULATION</scope>
    <scope>BIOPHYSICOCHEMICAL PROPERTIES</scope>
    <scope>SUBSTRATE SPECIFICITY</scope>
    <scope>SUBUNIT</scope>
    <source>
        <strain>DSM 10674 / SJ95</strain>
    </source>
</reference>
<evidence type="ECO:0000250" key="1">
    <source>
        <dbReference type="UniProtKB" id="P9WMW9"/>
    </source>
</evidence>
<evidence type="ECO:0000269" key="2">
    <source>
    </source>
</evidence>
<evidence type="ECO:0000303" key="3">
    <source>
    </source>
</evidence>
<evidence type="ECO:0000305" key="4"/>
<evidence type="ECO:0000305" key="5">
    <source>
    </source>
</evidence>
<evidence type="ECO:0000312" key="6">
    <source>
        <dbReference type="EMBL" id="ABX31861.1"/>
    </source>
</evidence>
<gene>
    <name evidence="3" type="primary">gpgS</name>
    <name evidence="6" type="ordered locus">Pmob_1142</name>
</gene>
<feature type="chain" id="PRO_0000431554" description="Glucosyl-3-phosphoglycerate synthase">
    <location>
        <begin position="1"/>
        <end position="325"/>
    </location>
</feature>
<feature type="binding site" evidence="1">
    <location>
        <begin position="37"/>
        <end position="41"/>
    </location>
    <ligand>
        <name>UDP-alpha-D-glucose</name>
        <dbReference type="ChEBI" id="CHEBI:58885"/>
    </ligand>
</feature>
<feature type="binding site" evidence="1">
    <location>
        <position position="71"/>
    </location>
    <ligand>
        <name>UDP-alpha-D-glucose</name>
        <dbReference type="ChEBI" id="CHEBI:58885"/>
    </ligand>
</feature>
<feature type="binding site" evidence="1">
    <location>
        <position position="104"/>
    </location>
    <ligand>
        <name>UDP-alpha-D-glucose</name>
        <dbReference type="ChEBI" id="CHEBI:58885"/>
    </ligand>
</feature>
<feature type="binding site" evidence="1">
    <location>
        <begin position="124"/>
        <end position="125"/>
    </location>
    <ligand>
        <name>UDP-alpha-D-glucose</name>
        <dbReference type="ChEBI" id="CHEBI:58885"/>
    </ligand>
</feature>
<feature type="binding site" evidence="1">
    <location>
        <position position="126"/>
    </location>
    <ligand>
        <name>Mn(2+)</name>
        <dbReference type="ChEBI" id="CHEBI:29035"/>
    </ligand>
</feature>
<feature type="binding site" evidence="1">
    <location>
        <begin position="171"/>
        <end position="174"/>
    </location>
    <ligand>
        <name>(2R)-3-phosphoglycerate</name>
        <dbReference type="ChEBI" id="CHEBI:58272"/>
    </ligand>
</feature>
<feature type="binding site" evidence="1">
    <location>
        <begin position="216"/>
        <end position="219"/>
    </location>
    <ligand>
        <name>UDP-alpha-D-glucose</name>
        <dbReference type="ChEBI" id="CHEBI:58885"/>
    </ligand>
</feature>
<feature type="binding site" evidence="1">
    <location>
        <begin position="243"/>
        <end position="248"/>
    </location>
    <ligand>
        <name>UDP-alpha-D-glucose</name>
        <dbReference type="ChEBI" id="CHEBI:58885"/>
    </ligand>
</feature>
<feature type="binding site" evidence="1">
    <location>
        <position position="245"/>
    </location>
    <ligand>
        <name>Mn(2+)</name>
        <dbReference type="ChEBI" id="CHEBI:29035"/>
    </ligand>
</feature>
<feature type="binding site" evidence="1">
    <location>
        <position position="247"/>
    </location>
    <ligand>
        <name>(2R)-3-phosphoglycerate</name>
        <dbReference type="ChEBI" id="CHEBI:58272"/>
    </ligand>
</feature>
<comment type="function">
    <text evidence="2">Involved in the biosynthesis of the compatible solute mannosylglucosylglycerate through a phosphorylating pathway. Catalyzes the transfer of the glucose moiety from a nuleotide sugar such as UDP-alpha-D-glucose to the position 2 of 3-phospho-D-glycerate (3-PGA) to form glucosyl-3-phosphoglycerate (GPG). UDP-glucose is the preferred substrate, but it can be partially replaced by ADP-glucose.</text>
</comment>
<comment type="catalytic activity">
    <reaction evidence="2">
        <text>an NDP-alpha-D-glucose + (2R)-3-phosphoglycerate = (2R)-2-O-(alpha-D-glucopyranosyl)-3-phospho-glycerate + a ribonucleoside 5'-diphosphate + H(+)</text>
        <dbReference type="Rhea" id="RHEA:47244"/>
        <dbReference type="ChEBI" id="CHEBI:15378"/>
        <dbReference type="ChEBI" id="CHEBI:57930"/>
        <dbReference type="ChEBI" id="CHEBI:58272"/>
        <dbReference type="ChEBI" id="CHEBI:62600"/>
        <dbReference type="ChEBI" id="CHEBI:76533"/>
        <dbReference type="EC" id="2.4.1.266"/>
    </reaction>
    <physiologicalReaction direction="left-to-right" evidence="5">
        <dbReference type="Rhea" id="RHEA:47245"/>
    </physiologicalReaction>
</comment>
<comment type="catalytic activity">
    <reaction evidence="2">
        <text>(2R)-3-phosphoglycerate + UDP-alpha-D-glucose = (2R)-2-O-(alpha-D-glucopyranosyl)-3-phospho-glycerate + UDP + H(+)</text>
        <dbReference type="Rhea" id="RHEA:31319"/>
        <dbReference type="ChEBI" id="CHEBI:15378"/>
        <dbReference type="ChEBI" id="CHEBI:58223"/>
        <dbReference type="ChEBI" id="CHEBI:58272"/>
        <dbReference type="ChEBI" id="CHEBI:58885"/>
        <dbReference type="ChEBI" id="CHEBI:62600"/>
        <dbReference type="EC" id="2.4.1.266"/>
    </reaction>
    <physiologicalReaction direction="left-to-right" evidence="5">
        <dbReference type="Rhea" id="RHEA:31320"/>
    </physiologicalReaction>
</comment>
<comment type="catalytic activity">
    <reaction evidence="2">
        <text>ADP-alpha-D-glucose + (2R)-3-phosphoglycerate = (2R)-2-O-(alpha-D-glucopyranosyl)-3-phospho-glycerate + ADP + H(+)</text>
        <dbReference type="Rhea" id="RHEA:31311"/>
        <dbReference type="ChEBI" id="CHEBI:15378"/>
        <dbReference type="ChEBI" id="CHEBI:57498"/>
        <dbReference type="ChEBI" id="CHEBI:58272"/>
        <dbReference type="ChEBI" id="CHEBI:62600"/>
        <dbReference type="ChEBI" id="CHEBI:456216"/>
        <dbReference type="EC" id="2.4.1.266"/>
    </reaction>
    <physiologicalReaction direction="left-to-right" evidence="5">
        <dbReference type="Rhea" id="RHEA:31312"/>
    </physiologicalReaction>
</comment>
<comment type="cofactor">
    <cofactor evidence="2">
        <name>Co(2+)</name>
        <dbReference type="ChEBI" id="CHEBI:48828"/>
    </cofactor>
    <cofactor evidence="2">
        <name>Mg(2+)</name>
        <dbReference type="ChEBI" id="CHEBI:18420"/>
    </cofactor>
    <cofactor evidence="2">
        <name>Mn(2+)</name>
        <dbReference type="ChEBI" id="CHEBI:29035"/>
    </cofactor>
    <cofactor evidence="2">
        <name>Ni(2+)</name>
        <dbReference type="ChEBI" id="CHEBI:49786"/>
    </cofactor>
    <cofactor evidence="2">
        <name>Zn(2+)</name>
        <dbReference type="ChEBI" id="CHEBI:29105"/>
    </cofactor>
    <text evidence="2">Requires divalent cations for activity.</text>
</comment>
<comment type="activity regulation">
    <text evidence="2">Inhibited by ADP and EDTA.</text>
</comment>
<comment type="biophysicochemical properties">
    <kinetics>
        <KM evidence="2">0.7 mM for 3-PGA (at 60 degrees Celsius)</KM>
        <KM evidence="2">0.5 mM for 3-PGA (at 70 degrees Celsius)</KM>
        <KM evidence="2">1 mM for UDP-glucose (at 60 degrees Celsius)</KM>
        <KM evidence="2">0.9 mM for UDP-glucose (at 70 degrees Celsius)</KM>
        <Vmax evidence="2">43.9 umol/min/mg enzyme toward 3-PGA (at 60 degrees Celsius)</Vmax>
        <Vmax evidence="2">65.0 umol/min/mg enzyme toward 3-PGA (at 70 degrees Celsius)</Vmax>
        <Vmax evidence="2">44.0 umol/min/mg enzyme toward UDP-glucose (at 60 degrees Celsius)</Vmax>
        <Vmax evidence="2">49.5 umol/min/mg enzyme toward UDP-glucose (at 70 degrees Celsius)</Vmax>
    </kinetics>
    <phDependence>
        <text evidence="2">Optimum pH is 7.0 (at 60 degrees Celsius).</text>
    </phDependence>
    <temperatureDependence>
        <text evidence="2">Optimum temperature is 70 degrees Celsius.</text>
    </temperatureDependence>
</comment>
<comment type="subunit">
    <text evidence="2">Homodimer in solution.</text>
</comment>
<comment type="similarity">
    <text evidence="4">Belongs to the glycosyltransferase 2 family.</text>
</comment>
<protein>
    <recommendedName>
        <fullName evidence="3">Glucosyl-3-phosphoglycerate synthase</fullName>
        <shortName evidence="4">GpgS</shortName>
        <ecNumber evidence="2">2.4.1.266</ecNumber>
    </recommendedName>
</protein>
<organism>
    <name type="scientific">Petrotoga mobilis (strain DSM 10674 / SJ95)</name>
    <dbReference type="NCBI Taxonomy" id="403833"/>
    <lineage>
        <taxon>Bacteria</taxon>
        <taxon>Thermotogati</taxon>
        <taxon>Thermotogota</taxon>
        <taxon>Thermotogae</taxon>
        <taxon>Petrotogales</taxon>
        <taxon>Petrotogaceae</taxon>
        <taxon>Petrotoga</taxon>
    </lineage>
</organism>
<proteinExistence type="evidence at protein level"/>
<keyword id="KW-0170">Cobalt</keyword>
<keyword id="KW-0328">Glycosyltransferase</keyword>
<keyword id="KW-0460">Magnesium</keyword>
<keyword id="KW-0464">Manganese</keyword>
<keyword id="KW-0479">Metal-binding</keyword>
<keyword id="KW-0533">Nickel</keyword>
<keyword id="KW-0808">Transferase</keyword>
<keyword id="KW-0862">Zinc</keyword>
<dbReference type="EC" id="2.4.1.266" evidence="2"/>
<dbReference type="EMBL" id="CP000879">
    <property type="protein sequence ID" value="ABX31861.1"/>
    <property type="molecule type" value="Genomic_DNA"/>
</dbReference>
<dbReference type="RefSeq" id="WP_012208962.1">
    <property type="nucleotide sequence ID" value="NC_010003.1"/>
</dbReference>
<dbReference type="SMR" id="A9BHI9"/>
<dbReference type="STRING" id="403833.Pmob_1142"/>
<dbReference type="CAZy" id="GT81">
    <property type="family name" value="Glycosyltransferase Family 81"/>
</dbReference>
<dbReference type="KEGG" id="pmo:Pmob_1142"/>
<dbReference type="eggNOG" id="COG1215">
    <property type="taxonomic scope" value="Bacteria"/>
</dbReference>
<dbReference type="HOGENOM" id="CLU_053119_0_0_0"/>
<dbReference type="OrthoDB" id="9810303at2"/>
<dbReference type="BioCyc" id="MetaCyc:MONOMER-16143"/>
<dbReference type="BRENDA" id="2.4.1.266">
    <property type="organism ID" value="11874"/>
</dbReference>
<dbReference type="Proteomes" id="UP000000789">
    <property type="component" value="Chromosome"/>
</dbReference>
<dbReference type="GO" id="GO:0016757">
    <property type="term" value="F:glycosyltransferase activity"/>
    <property type="evidence" value="ECO:0007669"/>
    <property type="project" value="UniProtKB-KW"/>
</dbReference>
<dbReference type="GO" id="GO:0046872">
    <property type="term" value="F:metal ion binding"/>
    <property type="evidence" value="ECO:0007669"/>
    <property type="project" value="UniProtKB-KW"/>
</dbReference>
<dbReference type="CDD" id="cd00761">
    <property type="entry name" value="Glyco_tranf_GTA_type"/>
    <property type="match status" value="1"/>
</dbReference>
<dbReference type="Gene3D" id="3.90.550.10">
    <property type="entry name" value="Spore Coat Polysaccharide Biosynthesis Protein SpsA, Chain A"/>
    <property type="match status" value="1"/>
</dbReference>
<dbReference type="InterPro" id="IPR001173">
    <property type="entry name" value="Glyco_trans_2-like"/>
</dbReference>
<dbReference type="InterPro" id="IPR050256">
    <property type="entry name" value="Glycosyltransferase_2"/>
</dbReference>
<dbReference type="InterPro" id="IPR029044">
    <property type="entry name" value="Nucleotide-diphossugar_trans"/>
</dbReference>
<dbReference type="NCBIfam" id="NF010496">
    <property type="entry name" value="PRK13915.1"/>
    <property type="match status" value="1"/>
</dbReference>
<dbReference type="PANTHER" id="PTHR48090:SF10">
    <property type="entry name" value="GLUCOSYL-3-PHOSPHOGLYCERATE SYNTHASE"/>
    <property type="match status" value="1"/>
</dbReference>
<dbReference type="PANTHER" id="PTHR48090">
    <property type="entry name" value="UNDECAPRENYL-PHOSPHATE 4-DEOXY-4-FORMAMIDO-L-ARABINOSE TRANSFERASE-RELATED"/>
    <property type="match status" value="1"/>
</dbReference>
<dbReference type="Pfam" id="PF00535">
    <property type="entry name" value="Glycos_transf_2"/>
    <property type="match status" value="1"/>
</dbReference>
<dbReference type="SUPFAM" id="SSF53448">
    <property type="entry name" value="Nucleotide-diphospho-sugar transferases"/>
    <property type="match status" value="1"/>
</dbReference>
<accession>A9BHI9</accession>
<sequence length="325" mass="37133">MKDNILKRSFHHSKFENIKELVKLKEKQDVKISLAFPSLNEEKTIGKEIIIMKSELMEKYPLLDEIAVIDSGSEDETVSIAKEYGAKVFYSSDILPEYGFYKGKGENLWKSLYALDGDIIVWVDSDIENIHPKFVYGLVGALLNYPEIGYVKAFYDRPIVGKSAMQPTGGGRVTELVARPLFSLFYPELSTIIQPLSGEYAGRREILEKLPFFVGYGVEIAHLIDIAEKFGSEIIAQVDLELRIHDNQPLHSLSKMAFELTKVVLKRLEKYGKLDLNTELTDKHIMIQKKENEKVLVPTEILSVERPPMITIPEYKEKFSKEEKV</sequence>